<evidence type="ECO:0000250" key="1"/>
<evidence type="ECO:0000255" key="2"/>
<evidence type="ECO:0000255" key="3">
    <source>
        <dbReference type="PROSITE-ProRule" id="PRU00205"/>
    </source>
</evidence>
<dbReference type="EMBL" id="AJ416474">
    <property type="protein sequence ID" value="CAC95155.1"/>
    <property type="molecule type" value="mRNA"/>
</dbReference>
<dbReference type="RefSeq" id="NP_001233968.2">
    <property type="nucleotide sequence ID" value="NM_001247039.2"/>
</dbReference>
<dbReference type="SMR" id="Q8W4Y5"/>
<dbReference type="FunCoup" id="Q8W4Y5">
    <property type="interactions" value="3558"/>
</dbReference>
<dbReference type="STRING" id="4081.Q8W4Y5"/>
<dbReference type="PaxDb" id="4081-Solyc05g010280.2.1"/>
<dbReference type="GeneID" id="543781"/>
<dbReference type="KEGG" id="sly:543781"/>
<dbReference type="eggNOG" id="KOG1607">
    <property type="taxonomic scope" value="Eukaryota"/>
</dbReference>
<dbReference type="InParanoid" id="Q8W4Y5"/>
<dbReference type="OrthoDB" id="537032at2759"/>
<dbReference type="Proteomes" id="UP000004994">
    <property type="component" value="Unplaced"/>
</dbReference>
<dbReference type="ExpressionAtlas" id="Q8W4Y5">
    <property type="expression patterns" value="baseline and differential"/>
</dbReference>
<dbReference type="GO" id="GO:0005783">
    <property type="term" value="C:endoplasmic reticulum"/>
    <property type="evidence" value="ECO:0000318"/>
    <property type="project" value="GO_Central"/>
</dbReference>
<dbReference type="GO" id="GO:0005789">
    <property type="term" value="C:endoplasmic reticulum membrane"/>
    <property type="evidence" value="ECO:0007669"/>
    <property type="project" value="UniProtKB-SubCell"/>
</dbReference>
<dbReference type="GO" id="GO:0050291">
    <property type="term" value="F:sphingosine N-acyltransferase activity"/>
    <property type="evidence" value="ECO:0000318"/>
    <property type="project" value="GO_Central"/>
</dbReference>
<dbReference type="GO" id="GO:0046513">
    <property type="term" value="P:ceramide biosynthetic process"/>
    <property type="evidence" value="ECO:0000318"/>
    <property type="project" value="GO_Central"/>
</dbReference>
<dbReference type="InterPro" id="IPR016439">
    <property type="entry name" value="Lag1/Lac1-like"/>
</dbReference>
<dbReference type="InterPro" id="IPR006634">
    <property type="entry name" value="TLC-dom"/>
</dbReference>
<dbReference type="PANTHER" id="PTHR12560:SF49">
    <property type="entry name" value="CERAMIDE SYNTHASE 1 LOH3"/>
    <property type="match status" value="1"/>
</dbReference>
<dbReference type="PANTHER" id="PTHR12560">
    <property type="entry name" value="LONGEVITY ASSURANCE FACTOR 1 LAG1"/>
    <property type="match status" value="1"/>
</dbReference>
<dbReference type="Pfam" id="PF03798">
    <property type="entry name" value="TRAM_LAG1_CLN8"/>
    <property type="match status" value="1"/>
</dbReference>
<dbReference type="PIRSF" id="PIRSF005225">
    <property type="entry name" value="LAG1_LAC1"/>
    <property type="match status" value="1"/>
</dbReference>
<dbReference type="SMART" id="SM00724">
    <property type="entry name" value="TLC"/>
    <property type="match status" value="1"/>
</dbReference>
<dbReference type="PROSITE" id="PS50922">
    <property type="entry name" value="TLC"/>
    <property type="match status" value="1"/>
</dbReference>
<proteinExistence type="evidence at transcript level"/>
<organism>
    <name type="scientific">Solanum lycopersicum</name>
    <name type="common">Tomato</name>
    <name type="synonym">Lycopersicon esculentum</name>
    <dbReference type="NCBI Taxonomy" id="4081"/>
    <lineage>
        <taxon>Eukaryota</taxon>
        <taxon>Viridiplantae</taxon>
        <taxon>Streptophyta</taxon>
        <taxon>Embryophyta</taxon>
        <taxon>Tracheophyta</taxon>
        <taxon>Spermatophyta</taxon>
        <taxon>Magnoliopsida</taxon>
        <taxon>eudicotyledons</taxon>
        <taxon>Gunneridae</taxon>
        <taxon>Pentapetalae</taxon>
        <taxon>asterids</taxon>
        <taxon>lamiids</taxon>
        <taxon>Solanales</taxon>
        <taxon>Solanaceae</taxon>
        <taxon>Solanoideae</taxon>
        <taxon>Solaneae</taxon>
        <taxon>Solanum</taxon>
        <taxon>Solanum subgen. Lycopersicon</taxon>
    </lineage>
</organism>
<reference key="1">
    <citation type="journal article" date="2002" name="Plant J.">
        <title>The plant disease resistance gene Asc-1 prevents disruption of sphingolipid metabolism during AAL-toxin-induced programmed cell death.</title>
        <authorList>
            <person name="Spassieva S.D."/>
            <person name="Markham J.E."/>
            <person name="Hille J."/>
        </authorList>
    </citation>
    <scope>NUCLEOTIDE SEQUENCE [MRNA]</scope>
    <source>
        <tissue>Leaf</tissue>
    </source>
</reference>
<protein>
    <recommendedName>
        <fullName>ASC1-like protein</fullName>
    </recommendedName>
    <alternativeName>
        <fullName>Alternaria stem canker resistance-like protein</fullName>
    </alternativeName>
</protein>
<comment type="function">
    <text evidence="1">Mediates resistance to sphinganine-analog mycotoxins (SAMs) by restoring the sphingolipid biosynthesis. Could salvage the transport of GPI-anchored proteins from the endoplasmic reticulum to the Golgi apparatus in ceramides-depleted cells after SAM exposure (By similarity).</text>
</comment>
<comment type="subcellular location">
    <subcellularLocation>
        <location evidence="1">Endoplasmic reticulum membrane</location>
        <topology evidence="1">Multi-pass membrane protein</topology>
    </subcellularLocation>
</comment>
<accession>Q8W4Y5</accession>
<name>ASCL_SOLLC</name>
<keyword id="KW-0256">Endoplasmic reticulum</keyword>
<keyword id="KW-0444">Lipid biosynthesis</keyword>
<keyword id="KW-0443">Lipid metabolism</keyword>
<keyword id="KW-0472">Membrane</keyword>
<keyword id="KW-1185">Reference proteome</keyword>
<keyword id="KW-0812">Transmembrane</keyword>
<keyword id="KW-1133">Transmembrane helix</keyword>
<feature type="chain" id="PRO_0000185522" description="ASC1-like protein">
    <location>
        <begin position="1"/>
        <end position="303"/>
    </location>
</feature>
<feature type="transmembrane region" description="Helical" evidence="2">
    <location>
        <begin position="19"/>
        <end position="39"/>
    </location>
</feature>
<feature type="transmembrane region" description="Helical" evidence="2">
    <location>
        <begin position="81"/>
        <end position="101"/>
    </location>
</feature>
<feature type="transmembrane region" description="Helical" evidence="2">
    <location>
        <begin position="127"/>
        <end position="147"/>
    </location>
</feature>
<feature type="transmembrane region" description="Helical" evidence="2">
    <location>
        <begin position="153"/>
        <end position="173"/>
    </location>
</feature>
<feature type="transmembrane region" description="Helical" evidence="2">
    <location>
        <begin position="212"/>
        <end position="232"/>
    </location>
</feature>
<feature type="transmembrane region" description="Helical" evidence="2">
    <location>
        <begin position="255"/>
        <end position="275"/>
    </location>
</feature>
<feature type="domain" description="TLC" evidence="3">
    <location>
        <begin position="72"/>
        <end position="284"/>
    </location>
</feature>
<sequence length="303" mass="36023">MGLLEGTFLDWEYESYPSYEDFAVLPLFALFFPSVRFLLDRFVFEKVARRLIFGKGQEVVENETDDRRRRIRKFKESAWKCIYFLSAEVFALVVTYNEPWFTNTRYFWVGPGDQVWPDQMYKSKLKALYMYTGGFYTYSIFALIFWETRRSDFGVSMSHHVATAILIVLSYNIRFARVGSVVLAIHDASDIFLEIGKMSKYSGAEALASFRYLCLSWIILRLIYYPFWVLWSTSYEVLQTLDKEKHKVDGPIYYYIFNSLLFCLLVLHIYWWVLIYRMLVKQIQARGQLSDDVRSDSEDEHED</sequence>